<name>RS24_META3</name>
<accession>A6UTQ0</accession>
<sequence length="102" mass="11651">MEIKITSDRANPLLHRREVKFIANYDGTTPSVNEIKMKITAMLNADKSLTIVDSICQEYGNTESLGYVKIYDDEKSMNLFEKKSVLEKNKIEEAETTEEDGE</sequence>
<reference key="1">
    <citation type="submission" date="2007-06" db="EMBL/GenBank/DDBJ databases">
        <title>Complete sequence of Methanococcus aeolicus Nankai-3.</title>
        <authorList>
            <consortium name="US DOE Joint Genome Institute"/>
            <person name="Copeland A."/>
            <person name="Lucas S."/>
            <person name="Lapidus A."/>
            <person name="Barry K."/>
            <person name="Glavina del Rio T."/>
            <person name="Dalin E."/>
            <person name="Tice H."/>
            <person name="Pitluck S."/>
            <person name="Chain P."/>
            <person name="Malfatti S."/>
            <person name="Shin M."/>
            <person name="Vergez L."/>
            <person name="Schmutz J."/>
            <person name="Larimer F."/>
            <person name="Land M."/>
            <person name="Hauser L."/>
            <person name="Kyrpides N."/>
            <person name="Lykidis A."/>
            <person name="Sieprawska-Lupa M."/>
            <person name="Whitman W.B."/>
            <person name="Richardson P."/>
        </authorList>
    </citation>
    <scope>NUCLEOTIDE SEQUENCE [LARGE SCALE GENOMIC DNA]</scope>
    <source>
        <strain>ATCC BAA-1280 / DSM 17508 / OCM 812 / Nankai-3</strain>
    </source>
</reference>
<comment type="similarity">
    <text evidence="1">Belongs to the eukaryotic ribosomal protein eS24 family.</text>
</comment>
<proteinExistence type="inferred from homology"/>
<gene>
    <name evidence="1" type="primary">rps24e</name>
    <name type="ordered locus">Maeo_0283</name>
</gene>
<organism>
    <name type="scientific">Methanococcus aeolicus (strain ATCC BAA-1280 / DSM 17508 / OCM 812 / Nankai-3)</name>
    <dbReference type="NCBI Taxonomy" id="419665"/>
    <lineage>
        <taxon>Archaea</taxon>
        <taxon>Methanobacteriati</taxon>
        <taxon>Methanobacteriota</taxon>
        <taxon>Methanomada group</taxon>
        <taxon>Methanococci</taxon>
        <taxon>Methanococcales</taxon>
        <taxon>Methanococcaceae</taxon>
        <taxon>Methanococcus</taxon>
    </lineage>
</organism>
<feature type="chain" id="PRO_1000017738" description="Small ribosomal subunit protein eS24">
    <location>
        <begin position="1"/>
        <end position="102"/>
    </location>
</feature>
<protein>
    <recommendedName>
        <fullName evidence="1">Small ribosomal subunit protein eS24</fullName>
    </recommendedName>
    <alternativeName>
        <fullName evidence="2">30S ribosomal protein S24e</fullName>
    </alternativeName>
</protein>
<dbReference type="EMBL" id="CP000743">
    <property type="protein sequence ID" value="ABR55872.1"/>
    <property type="molecule type" value="Genomic_DNA"/>
</dbReference>
<dbReference type="RefSeq" id="WP_011973004.1">
    <property type="nucleotide sequence ID" value="NC_009635.1"/>
</dbReference>
<dbReference type="SMR" id="A6UTQ0"/>
<dbReference type="STRING" id="419665.Maeo_0283"/>
<dbReference type="GeneID" id="5326648"/>
<dbReference type="KEGG" id="mae:Maeo_0283"/>
<dbReference type="eggNOG" id="arCOG04182">
    <property type="taxonomic scope" value="Archaea"/>
</dbReference>
<dbReference type="HOGENOM" id="CLU_107248_3_1_2"/>
<dbReference type="OrthoDB" id="27533at2157"/>
<dbReference type="Proteomes" id="UP000001106">
    <property type="component" value="Chromosome"/>
</dbReference>
<dbReference type="GO" id="GO:1990904">
    <property type="term" value="C:ribonucleoprotein complex"/>
    <property type="evidence" value="ECO:0007669"/>
    <property type="project" value="UniProtKB-KW"/>
</dbReference>
<dbReference type="GO" id="GO:0005840">
    <property type="term" value="C:ribosome"/>
    <property type="evidence" value="ECO:0007669"/>
    <property type="project" value="UniProtKB-KW"/>
</dbReference>
<dbReference type="GO" id="GO:0003735">
    <property type="term" value="F:structural constituent of ribosome"/>
    <property type="evidence" value="ECO:0007669"/>
    <property type="project" value="InterPro"/>
</dbReference>
<dbReference type="GO" id="GO:0006412">
    <property type="term" value="P:translation"/>
    <property type="evidence" value="ECO:0007669"/>
    <property type="project" value="UniProtKB-UniRule"/>
</dbReference>
<dbReference type="Gene3D" id="3.30.70.330">
    <property type="match status" value="1"/>
</dbReference>
<dbReference type="HAMAP" id="MF_00545">
    <property type="entry name" value="Ribosomal_eS24"/>
    <property type="match status" value="1"/>
</dbReference>
<dbReference type="InterPro" id="IPR012677">
    <property type="entry name" value="Nucleotide-bd_a/b_plait_sf"/>
</dbReference>
<dbReference type="InterPro" id="IPR001976">
    <property type="entry name" value="Ribosomal_eS24"/>
</dbReference>
<dbReference type="InterPro" id="IPR018098">
    <property type="entry name" value="Ribosomal_eS24_CS"/>
</dbReference>
<dbReference type="InterPro" id="IPR012678">
    <property type="entry name" value="Ribosomal_uL23/eL15/eS24_sf"/>
</dbReference>
<dbReference type="Pfam" id="PF01282">
    <property type="entry name" value="Ribosomal_S24e"/>
    <property type="match status" value="1"/>
</dbReference>
<dbReference type="SUPFAM" id="SSF54189">
    <property type="entry name" value="Ribosomal proteins S24e, L23 and L15e"/>
    <property type="match status" value="1"/>
</dbReference>
<dbReference type="PROSITE" id="PS00529">
    <property type="entry name" value="RIBOSOMAL_S24E"/>
    <property type="match status" value="1"/>
</dbReference>
<keyword id="KW-0687">Ribonucleoprotein</keyword>
<keyword id="KW-0689">Ribosomal protein</keyword>
<evidence type="ECO:0000255" key="1">
    <source>
        <dbReference type="HAMAP-Rule" id="MF_00545"/>
    </source>
</evidence>
<evidence type="ECO:0000305" key="2"/>